<name>ARGE_SHIFL</name>
<comment type="function">
    <text evidence="1">Catalyzes the hydrolysis of the amide bond of N(2)-acetylated L-amino acids. Cleaves the acetyl group from N-acetyl-L-ornithine to form L-ornithine, an intermediate in L-arginine biosynthesis pathway, and a branchpoint in the synthesis of polyamines.</text>
</comment>
<comment type="catalytic activity">
    <reaction evidence="1">
        <text>N(2)-acetyl-L-ornithine + H2O = L-ornithine + acetate</text>
        <dbReference type="Rhea" id="RHEA:15941"/>
        <dbReference type="ChEBI" id="CHEBI:15377"/>
        <dbReference type="ChEBI" id="CHEBI:30089"/>
        <dbReference type="ChEBI" id="CHEBI:46911"/>
        <dbReference type="ChEBI" id="CHEBI:57805"/>
        <dbReference type="EC" id="3.5.1.16"/>
    </reaction>
</comment>
<comment type="cofactor">
    <cofactor evidence="1">
        <name>Zn(2+)</name>
        <dbReference type="ChEBI" id="CHEBI:29105"/>
    </cofactor>
    <cofactor evidence="1">
        <name>Co(2+)</name>
        <dbReference type="ChEBI" id="CHEBI:48828"/>
    </cofactor>
    <text evidence="1">Binds 2 Zn(2+) or Co(2+) ions per subunit.</text>
</comment>
<comment type="cofactor">
    <cofactor evidence="1">
        <name>glutathione</name>
        <dbReference type="ChEBI" id="CHEBI:57925"/>
    </cofactor>
</comment>
<comment type="pathway">
    <text evidence="1">Amino-acid biosynthesis; L-arginine biosynthesis; L-ornithine from N(2)-acetyl-L-ornithine (linear): step 1/1.</text>
</comment>
<comment type="subunit">
    <text evidence="1">Homodimer.</text>
</comment>
<comment type="subcellular location">
    <subcellularLocation>
        <location evidence="1">Cytoplasm</location>
    </subcellularLocation>
</comment>
<comment type="similarity">
    <text evidence="1 2">Belongs to the peptidase M20A family. ArgE subfamily.</text>
</comment>
<reference key="1">
    <citation type="journal article" date="2002" name="Nucleic Acids Res.">
        <title>Genome sequence of Shigella flexneri 2a: insights into pathogenicity through comparison with genomes of Escherichia coli K12 and O157.</title>
        <authorList>
            <person name="Jin Q."/>
            <person name="Yuan Z."/>
            <person name="Xu J."/>
            <person name="Wang Y."/>
            <person name="Shen Y."/>
            <person name="Lu W."/>
            <person name="Wang J."/>
            <person name="Liu H."/>
            <person name="Yang J."/>
            <person name="Yang F."/>
            <person name="Zhang X."/>
            <person name="Zhang J."/>
            <person name="Yang G."/>
            <person name="Wu H."/>
            <person name="Qu D."/>
            <person name="Dong J."/>
            <person name="Sun L."/>
            <person name="Xue Y."/>
            <person name="Zhao A."/>
            <person name="Gao Y."/>
            <person name="Zhu J."/>
            <person name="Kan B."/>
            <person name="Ding K."/>
            <person name="Chen S."/>
            <person name="Cheng H."/>
            <person name="Yao Z."/>
            <person name="He B."/>
            <person name="Chen R."/>
            <person name="Ma D."/>
            <person name="Qiang B."/>
            <person name="Wen Y."/>
            <person name="Hou Y."/>
            <person name="Yu J."/>
        </authorList>
    </citation>
    <scope>NUCLEOTIDE SEQUENCE [LARGE SCALE GENOMIC DNA]</scope>
    <source>
        <strain>301 / Serotype 2a</strain>
    </source>
</reference>
<reference key="2">
    <citation type="journal article" date="2003" name="Infect. Immun.">
        <title>Complete genome sequence and comparative genomics of Shigella flexneri serotype 2a strain 2457T.</title>
        <authorList>
            <person name="Wei J."/>
            <person name="Goldberg M.B."/>
            <person name="Burland V."/>
            <person name="Venkatesan M.M."/>
            <person name="Deng W."/>
            <person name="Fournier G."/>
            <person name="Mayhew G.F."/>
            <person name="Plunkett G. III"/>
            <person name="Rose D.J."/>
            <person name="Darling A."/>
            <person name="Mau B."/>
            <person name="Perna N.T."/>
            <person name="Payne S.M."/>
            <person name="Runyen-Janecky L.J."/>
            <person name="Zhou S."/>
            <person name="Schwartz D.C."/>
            <person name="Blattner F.R."/>
        </authorList>
    </citation>
    <scope>NUCLEOTIDE SEQUENCE [LARGE SCALE GENOMIC DNA]</scope>
    <source>
        <strain>ATCC 700930 / 2457T / Serotype 2a</strain>
    </source>
</reference>
<proteinExistence type="inferred from homology"/>
<keyword id="KW-0028">Amino-acid biosynthesis</keyword>
<keyword id="KW-0055">Arginine biosynthesis</keyword>
<keyword id="KW-0170">Cobalt</keyword>
<keyword id="KW-0963">Cytoplasm</keyword>
<keyword id="KW-0378">Hydrolase</keyword>
<keyword id="KW-0479">Metal-binding</keyword>
<keyword id="KW-1185">Reference proteome</keyword>
<keyword id="KW-0862">Zinc</keyword>
<dbReference type="EC" id="3.5.1.16" evidence="1"/>
<dbReference type="EMBL" id="AE005674">
    <property type="protein sequence ID" value="AAN45464.2"/>
    <property type="molecule type" value="Genomic_DNA"/>
</dbReference>
<dbReference type="EMBL" id="AE014073">
    <property type="protein sequence ID" value="AAP18738.1"/>
    <property type="molecule type" value="Genomic_DNA"/>
</dbReference>
<dbReference type="RefSeq" id="NP_709757.2">
    <property type="nucleotide sequence ID" value="NC_004337.2"/>
</dbReference>
<dbReference type="RefSeq" id="WP_005050468.1">
    <property type="nucleotide sequence ID" value="NZ_WPGW01000012.1"/>
</dbReference>
<dbReference type="SMR" id="P59600"/>
<dbReference type="STRING" id="198214.SF4034"/>
<dbReference type="MEROPS" id="M20.974"/>
<dbReference type="PaxDb" id="198214-SF4034"/>
<dbReference type="GeneID" id="1024160"/>
<dbReference type="KEGG" id="sfl:SF4034"/>
<dbReference type="KEGG" id="sfx:S3712"/>
<dbReference type="PATRIC" id="fig|198214.7.peg.4756"/>
<dbReference type="HOGENOM" id="CLU_021802_2_4_6"/>
<dbReference type="UniPathway" id="UPA00068">
    <property type="reaction ID" value="UER00110"/>
</dbReference>
<dbReference type="Proteomes" id="UP000001006">
    <property type="component" value="Chromosome"/>
</dbReference>
<dbReference type="Proteomes" id="UP000002673">
    <property type="component" value="Chromosome"/>
</dbReference>
<dbReference type="GO" id="GO:0005737">
    <property type="term" value="C:cytoplasm"/>
    <property type="evidence" value="ECO:0007669"/>
    <property type="project" value="UniProtKB-SubCell"/>
</dbReference>
<dbReference type="GO" id="GO:0008777">
    <property type="term" value="F:acetylornithine deacetylase activity"/>
    <property type="evidence" value="ECO:0007669"/>
    <property type="project" value="UniProtKB-UniRule"/>
</dbReference>
<dbReference type="GO" id="GO:0008270">
    <property type="term" value="F:zinc ion binding"/>
    <property type="evidence" value="ECO:0007669"/>
    <property type="project" value="UniProtKB-UniRule"/>
</dbReference>
<dbReference type="GO" id="GO:0006526">
    <property type="term" value="P:L-arginine biosynthetic process"/>
    <property type="evidence" value="ECO:0007669"/>
    <property type="project" value="UniProtKB-UniRule"/>
</dbReference>
<dbReference type="CDD" id="cd03894">
    <property type="entry name" value="M20_ArgE"/>
    <property type="match status" value="1"/>
</dbReference>
<dbReference type="FunFam" id="3.30.70.360:FF:000003">
    <property type="entry name" value="Acetylornithine deacetylase"/>
    <property type="match status" value="1"/>
</dbReference>
<dbReference type="Gene3D" id="3.30.70.360">
    <property type="match status" value="1"/>
</dbReference>
<dbReference type="Gene3D" id="3.40.630.10">
    <property type="entry name" value="Zn peptidases"/>
    <property type="match status" value="1"/>
</dbReference>
<dbReference type="HAMAP" id="MF_01108">
    <property type="entry name" value="ArgE"/>
    <property type="match status" value="1"/>
</dbReference>
<dbReference type="InterPro" id="IPR010169">
    <property type="entry name" value="AcOrn-deacetyl"/>
</dbReference>
<dbReference type="InterPro" id="IPR001261">
    <property type="entry name" value="ArgE/DapE_CS"/>
</dbReference>
<dbReference type="InterPro" id="IPR036264">
    <property type="entry name" value="Bact_exopeptidase_dim_dom"/>
</dbReference>
<dbReference type="InterPro" id="IPR002933">
    <property type="entry name" value="Peptidase_M20"/>
</dbReference>
<dbReference type="InterPro" id="IPR011650">
    <property type="entry name" value="Peptidase_M20_dimer"/>
</dbReference>
<dbReference type="InterPro" id="IPR050072">
    <property type="entry name" value="Peptidase_M20A"/>
</dbReference>
<dbReference type="NCBIfam" id="TIGR01892">
    <property type="entry name" value="AcOrn-deacetyl"/>
    <property type="match status" value="1"/>
</dbReference>
<dbReference type="NCBIfam" id="NF003474">
    <property type="entry name" value="PRK05111.1"/>
    <property type="match status" value="1"/>
</dbReference>
<dbReference type="PANTHER" id="PTHR43808">
    <property type="entry name" value="ACETYLORNITHINE DEACETYLASE"/>
    <property type="match status" value="1"/>
</dbReference>
<dbReference type="PANTHER" id="PTHR43808:SF1">
    <property type="entry name" value="ACETYLORNITHINE DEACETYLASE"/>
    <property type="match status" value="1"/>
</dbReference>
<dbReference type="Pfam" id="PF07687">
    <property type="entry name" value="M20_dimer"/>
    <property type="match status" value="1"/>
</dbReference>
<dbReference type="Pfam" id="PF01546">
    <property type="entry name" value="Peptidase_M20"/>
    <property type="match status" value="1"/>
</dbReference>
<dbReference type="SUPFAM" id="SSF55031">
    <property type="entry name" value="Bacterial exopeptidase dimerisation domain"/>
    <property type="match status" value="1"/>
</dbReference>
<dbReference type="SUPFAM" id="SSF53187">
    <property type="entry name" value="Zn-dependent exopeptidases"/>
    <property type="match status" value="1"/>
</dbReference>
<dbReference type="PROSITE" id="PS00758">
    <property type="entry name" value="ARGE_DAPE_CPG2_1"/>
    <property type="match status" value="1"/>
</dbReference>
<dbReference type="PROSITE" id="PS00759">
    <property type="entry name" value="ARGE_DAPE_CPG2_2"/>
    <property type="match status" value="1"/>
</dbReference>
<protein>
    <recommendedName>
        <fullName evidence="1">Acetylornithine deacetylase</fullName>
        <shortName evidence="1">AO</shortName>
        <shortName evidence="1">Acetylornithinase</shortName>
        <ecNumber evidence="1">3.5.1.16</ecNumber>
    </recommendedName>
    <alternativeName>
        <fullName evidence="1">N-acetylornithinase</fullName>
        <shortName evidence="1">NAO</shortName>
    </alternativeName>
</protein>
<feature type="chain" id="PRO_0000185250" description="Acetylornithine deacetylase">
    <location>
        <begin position="1"/>
        <end position="383"/>
    </location>
</feature>
<feature type="active site" evidence="1">
    <location>
        <position position="82"/>
    </location>
</feature>
<feature type="active site" evidence="1">
    <location>
        <position position="144"/>
    </location>
</feature>
<feature type="binding site" evidence="1">
    <location>
        <position position="80"/>
    </location>
    <ligand>
        <name>Zn(2+)</name>
        <dbReference type="ChEBI" id="CHEBI:29105"/>
        <label>1</label>
    </ligand>
</feature>
<feature type="binding site" evidence="1">
    <location>
        <position position="112"/>
    </location>
    <ligand>
        <name>Zn(2+)</name>
        <dbReference type="ChEBI" id="CHEBI:29105"/>
        <label>1</label>
    </ligand>
</feature>
<feature type="binding site" evidence="1">
    <location>
        <position position="112"/>
    </location>
    <ligand>
        <name>Zn(2+)</name>
        <dbReference type="ChEBI" id="CHEBI:29105"/>
        <label>2</label>
    </ligand>
</feature>
<feature type="binding site" evidence="1">
    <location>
        <position position="145"/>
    </location>
    <ligand>
        <name>Zn(2+)</name>
        <dbReference type="ChEBI" id="CHEBI:29105"/>
        <label>2</label>
    </ligand>
</feature>
<feature type="binding site" evidence="1">
    <location>
        <position position="169"/>
    </location>
    <ligand>
        <name>Zn(2+)</name>
        <dbReference type="ChEBI" id="CHEBI:29105"/>
        <label>1</label>
    </ligand>
</feature>
<feature type="binding site" evidence="1">
    <location>
        <position position="355"/>
    </location>
    <ligand>
        <name>Zn(2+)</name>
        <dbReference type="ChEBI" id="CHEBI:29105"/>
        <label>2</label>
    </ligand>
</feature>
<accession>P59600</accession>
<organism>
    <name type="scientific">Shigella flexneri</name>
    <dbReference type="NCBI Taxonomy" id="623"/>
    <lineage>
        <taxon>Bacteria</taxon>
        <taxon>Pseudomonadati</taxon>
        <taxon>Pseudomonadota</taxon>
        <taxon>Gammaproteobacteria</taxon>
        <taxon>Enterobacterales</taxon>
        <taxon>Enterobacteriaceae</taxon>
        <taxon>Shigella</taxon>
    </lineage>
</organism>
<gene>
    <name evidence="1" type="primary">argE</name>
    <name type="ordered locus">SF4034</name>
    <name type="ordered locus">S3712</name>
</gene>
<sequence length="383" mass="42438">MKNKLPPFIEIYRALIATPSISATEEALDQSNADLITLLADWFKDLGFNVEVQPVPGTRNKFNMLASYGQGAGGLLLAGHTDTVPFDDGRWTRDPFTLTEHDGKLYGLGTADMKGFFAFILDALRDVDVTKLKKPLYILATADEETSMAGARYFAETTALRPDCAIIGEPTSLQPVRAHKGHISNAIRIQGQSGHSSDPARGINAIELMHDAIGHILQLRDNLKERYHYEAFTVPYPTLNLGHIHGGDASNRICACCELHMDIRPQPGMTLNELNGLLNDALAPVSERWPGRLTVDELHPPIPGYECPPNHQLVEVVEKLLGAKTEVVNYCTEAPFIQTLCPTLVLGPGSINQAHQPDEYLETRFIKPTRELIIQVIHHFCWH</sequence>
<evidence type="ECO:0000255" key="1">
    <source>
        <dbReference type="HAMAP-Rule" id="MF_01108"/>
    </source>
</evidence>
<evidence type="ECO:0000305" key="2"/>